<dbReference type="EC" id="2.5.1.72" evidence="1"/>
<dbReference type="EMBL" id="CP001048">
    <property type="protein sequence ID" value="ACC88214.1"/>
    <property type="molecule type" value="Genomic_DNA"/>
</dbReference>
<dbReference type="RefSeq" id="WP_002210741.1">
    <property type="nucleotide sequence ID" value="NZ_CP009780.1"/>
</dbReference>
<dbReference type="SMR" id="B2K8Q8"/>
<dbReference type="GeneID" id="57977266"/>
<dbReference type="KEGG" id="ypb:YPTS_1239"/>
<dbReference type="PATRIC" id="fig|502801.10.peg.588"/>
<dbReference type="UniPathway" id="UPA00253">
    <property type="reaction ID" value="UER00327"/>
</dbReference>
<dbReference type="GO" id="GO:0005829">
    <property type="term" value="C:cytosol"/>
    <property type="evidence" value="ECO:0007669"/>
    <property type="project" value="TreeGrafter"/>
</dbReference>
<dbReference type="GO" id="GO:0051539">
    <property type="term" value="F:4 iron, 4 sulfur cluster binding"/>
    <property type="evidence" value="ECO:0007669"/>
    <property type="project" value="UniProtKB-KW"/>
</dbReference>
<dbReference type="GO" id="GO:0046872">
    <property type="term" value="F:metal ion binding"/>
    <property type="evidence" value="ECO:0007669"/>
    <property type="project" value="UniProtKB-KW"/>
</dbReference>
<dbReference type="GO" id="GO:0008987">
    <property type="term" value="F:quinolinate synthetase A activity"/>
    <property type="evidence" value="ECO:0007669"/>
    <property type="project" value="UniProtKB-UniRule"/>
</dbReference>
<dbReference type="GO" id="GO:0034628">
    <property type="term" value="P:'de novo' NAD biosynthetic process from L-aspartate"/>
    <property type="evidence" value="ECO:0007669"/>
    <property type="project" value="TreeGrafter"/>
</dbReference>
<dbReference type="FunFam" id="3.40.50.10800:FF:000003">
    <property type="entry name" value="Quinolinate synthase A"/>
    <property type="match status" value="1"/>
</dbReference>
<dbReference type="Gene3D" id="3.40.50.10800">
    <property type="entry name" value="NadA-like"/>
    <property type="match status" value="3"/>
</dbReference>
<dbReference type="HAMAP" id="MF_00567">
    <property type="entry name" value="NadA_type1"/>
    <property type="match status" value="1"/>
</dbReference>
<dbReference type="InterPro" id="IPR003473">
    <property type="entry name" value="NadA"/>
</dbReference>
<dbReference type="InterPro" id="IPR036094">
    <property type="entry name" value="NadA_sf"/>
</dbReference>
<dbReference type="InterPro" id="IPR023513">
    <property type="entry name" value="Quinolinate_synth_A_type1"/>
</dbReference>
<dbReference type="NCBIfam" id="TIGR00550">
    <property type="entry name" value="nadA"/>
    <property type="match status" value="1"/>
</dbReference>
<dbReference type="NCBIfam" id="NF006877">
    <property type="entry name" value="PRK09375.1-1"/>
    <property type="match status" value="1"/>
</dbReference>
<dbReference type="NCBIfam" id="NF006878">
    <property type="entry name" value="PRK09375.1-2"/>
    <property type="match status" value="1"/>
</dbReference>
<dbReference type="PANTHER" id="PTHR30573:SF0">
    <property type="entry name" value="QUINOLINATE SYNTHASE, CHLOROPLASTIC"/>
    <property type="match status" value="1"/>
</dbReference>
<dbReference type="PANTHER" id="PTHR30573">
    <property type="entry name" value="QUINOLINATE SYNTHETASE A"/>
    <property type="match status" value="1"/>
</dbReference>
<dbReference type="Pfam" id="PF02445">
    <property type="entry name" value="NadA"/>
    <property type="match status" value="1"/>
</dbReference>
<dbReference type="SUPFAM" id="SSF142754">
    <property type="entry name" value="NadA-like"/>
    <property type="match status" value="1"/>
</dbReference>
<accession>B2K8Q8</accession>
<feature type="chain" id="PRO_1000129430" description="Quinolinate synthase">
    <location>
        <begin position="1"/>
        <end position="353"/>
    </location>
</feature>
<feature type="binding site" evidence="1">
    <location>
        <position position="47"/>
    </location>
    <ligand>
        <name>iminosuccinate</name>
        <dbReference type="ChEBI" id="CHEBI:77875"/>
    </ligand>
</feature>
<feature type="binding site" evidence="1">
    <location>
        <position position="68"/>
    </location>
    <ligand>
        <name>iminosuccinate</name>
        <dbReference type="ChEBI" id="CHEBI:77875"/>
    </ligand>
</feature>
<feature type="binding site" evidence="1">
    <location>
        <position position="113"/>
    </location>
    <ligand>
        <name>[4Fe-4S] cluster</name>
        <dbReference type="ChEBI" id="CHEBI:49883"/>
    </ligand>
</feature>
<feature type="binding site" evidence="1">
    <location>
        <begin position="139"/>
        <end position="141"/>
    </location>
    <ligand>
        <name>iminosuccinate</name>
        <dbReference type="ChEBI" id="CHEBI:77875"/>
    </ligand>
</feature>
<feature type="binding site" evidence="1">
    <location>
        <position position="156"/>
    </location>
    <ligand>
        <name>iminosuccinate</name>
        <dbReference type="ChEBI" id="CHEBI:77875"/>
    </ligand>
</feature>
<feature type="binding site" evidence="1">
    <location>
        <position position="200"/>
    </location>
    <ligand>
        <name>[4Fe-4S] cluster</name>
        <dbReference type="ChEBI" id="CHEBI:49883"/>
    </ligand>
</feature>
<feature type="binding site" evidence="1">
    <location>
        <begin position="226"/>
        <end position="228"/>
    </location>
    <ligand>
        <name>iminosuccinate</name>
        <dbReference type="ChEBI" id="CHEBI:77875"/>
    </ligand>
</feature>
<feature type="binding site" evidence="1">
    <location>
        <position position="243"/>
    </location>
    <ligand>
        <name>iminosuccinate</name>
        <dbReference type="ChEBI" id="CHEBI:77875"/>
    </ligand>
</feature>
<feature type="binding site" evidence="1">
    <location>
        <position position="297"/>
    </location>
    <ligand>
        <name>[4Fe-4S] cluster</name>
        <dbReference type="ChEBI" id="CHEBI:49883"/>
    </ligand>
</feature>
<sequence>MSEIFDVNAAIYPFPARPVPLDTNEKAFYREKIKTLLKQRDAVLVAHYYTDPEIQALAEETGGCVADSLEMARFGNNHPASTLLVAGVRFMGETAKILNPEKKVLMPTLNAECSLDLGCPVDEFTAFCDSHPDRTVVVYANTSAAVKAKADWVVTSSIAVELIEHLDSLGEKIIWAPDRHLGSYVQKKSGADVLCWQGACIVHDEFKTQALARMKALYPDAAVLVHPESPQAVVDMADAVGSTSQLIQAAKTLPQKTLIVATDRGIFYKMQQACPDKELFEAPTAGEGATCRSCAHCPWMAMNGLRAIAEGLEQGGVMHEIHVDEELRQQALIPLNRMLDFANQLKLQVKGNA</sequence>
<reference key="1">
    <citation type="submission" date="2008-04" db="EMBL/GenBank/DDBJ databases">
        <title>Complete sequence of Yersinia pseudotuberculosis PB1/+.</title>
        <authorList>
            <person name="Copeland A."/>
            <person name="Lucas S."/>
            <person name="Lapidus A."/>
            <person name="Glavina del Rio T."/>
            <person name="Dalin E."/>
            <person name="Tice H."/>
            <person name="Bruce D."/>
            <person name="Goodwin L."/>
            <person name="Pitluck S."/>
            <person name="Munk A.C."/>
            <person name="Brettin T."/>
            <person name="Detter J.C."/>
            <person name="Han C."/>
            <person name="Tapia R."/>
            <person name="Schmutz J."/>
            <person name="Larimer F."/>
            <person name="Land M."/>
            <person name="Hauser L."/>
            <person name="Challacombe J.F."/>
            <person name="Green L."/>
            <person name="Lindler L.E."/>
            <person name="Nikolich M.P."/>
            <person name="Richardson P."/>
        </authorList>
    </citation>
    <scope>NUCLEOTIDE SEQUENCE [LARGE SCALE GENOMIC DNA]</scope>
    <source>
        <strain>PB1/+</strain>
    </source>
</reference>
<protein>
    <recommendedName>
        <fullName evidence="1">Quinolinate synthase</fullName>
        <ecNumber evidence="1">2.5.1.72</ecNumber>
    </recommendedName>
</protein>
<evidence type="ECO:0000255" key="1">
    <source>
        <dbReference type="HAMAP-Rule" id="MF_00567"/>
    </source>
</evidence>
<organism>
    <name type="scientific">Yersinia pseudotuberculosis serotype IB (strain PB1/+)</name>
    <dbReference type="NCBI Taxonomy" id="502801"/>
    <lineage>
        <taxon>Bacteria</taxon>
        <taxon>Pseudomonadati</taxon>
        <taxon>Pseudomonadota</taxon>
        <taxon>Gammaproteobacteria</taxon>
        <taxon>Enterobacterales</taxon>
        <taxon>Yersiniaceae</taxon>
        <taxon>Yersinia</taxon>
    </lineage>
</organism>
<keyword id="KW-0004">4Fe-4S</keyword>
<keyword id="KW-0963">Cytoplasm</keyword>
<keyword id="KW-0408">Iron</keyword>
<keyword id="KW-0411">Iron-sulfur</keyword>
<keyword id="KW-0479">Metal-binding</keyword>
<keyword id="KW-0662">Pyridine nucleotide biosynthesis</keyword>
<keyword id="KW-0808">Transferase</keyword>
<comment type="function">
    <text evidence="1">Catalyzes the condensation of iminoaspartate with dihydroxyacetone phosphate to form quinolinate.</text>
</comment>
<comment type="catalytic activity">
    <reaction evidence="1">
        <text>iminosuccinate + dihydroxyacetone phosphate = quinolinate + phosphate + 2 H2O + H(+)</text>
        <dbReference type="Rhea" id="RHEA:25888"/>
        <dbReference type="ChEBI" id="CHEBI:15377"/>
        <dbReference type="ChEBI" id="CHEBI:15378"/>
        <dbReference type="ChEBI" id="CHEBI:29959"/>
        <dbReference type="ChEBI" id="CHEBI:43474"/>
        <dbReference type="ChEBI" id="CHEBI:57642"/>
        <dbReference type="ChEBI" id="CHEBI:77875"/>
        <dbReference type="EC" id="2.5.1.72"/>
    </reaction>
    <physiologicalReaction direction="left-to-right" evidence="1">
        <dbReference type="Rhea" id="RHEA:25889"/>
    </physiologicalReaction>
</comment>
<comment type="cofactor">
    <cofactor evidence="1">
        <name>[4Fe-4S] cluster</name>
        <dbReference type="ChEBI" id="CHEBI:49883"/>
    </cofactor>
    <text evidence="1">Binds 1 [4Fe-4S] cluster per subunit.</text>
</comment>
<comment type="pathway">
    <text evidence="1">Cofactor biosynthesis; NAD(+) biosynthesis; quinolinate from iminoaspartate: step 1/1.</text>
</comment>
<comment type="subcellular location">
    <subcellularLocation>
        <location evidence="1">Cytoplasm</location>
    </subcellularLocation>
</comment>
<comment type="similarity">
    <text evidence="1">Belongs to the quinolinate synthase family. Type 1 subfamily.</text>
</comment>
<gene>
    <name evidence="1" type="primary">nadA</name>
    <name type="ordered locus">YPTS_1239</name>
</gene>
<name>NADA_YERPB</name>
<proteinExistence type="inferred from homology"/>